<protein>
    <recommendedName>
        <fullName evidence="1">Ubiquinone biosynthesis protein coq-4, mitochondrial</fullName>
    </recommendedName>
    <alternativeName>
        <fullName>4-hydroxy-3-methoxy-5-polyprenylbenzoate decarboxylase</fullName>
        <ecNumber evidence="1">4.1.1.130</ecNumber>
    </alternativeName>
    <alternativeName>
        <fullName evidence="1">Coenzyme Q biosynthesis protein 4</fullName>
    </alternativeName>
</protein>
<accession>Q7SEQ9</accession>
<proteinExistence type="evidence at transcript level"/>
<keyword id="KW-0456">Lyase</keyword>
<keyword id="KW-0472">Membrane</keyword>
<keyword id="KW-0479">Metal-binding</keyword>
<keyword id="KW-0496">Mitochondrion</keyword>
<keyword id="KW-0999">Mitochondrion inner membrane</keyword>
<keyword id="KW-1185">Reference proteome</keyword>
<keyword id="KW-0809">Transit peptide</keyword>
<keyword id="KW-0831">Ubiquinone biosynthesis</keyword>
<keyword id="KW-0862">Zinc</keyword>
<evidence type="ECO:0000255" key="1">
    <source>
        <dbReference type="HAMAP-Rule" id="MF_03111"/>
    </source>
</evidence>
<evidence type="ECO:0000256" key="2">
    <source>
        <dbReference type="SAM" id="MobiDB-lite"/>
    </source>
</evidence>
<dbReference type="EC" id="4.1.1.130" evidence="1"/>
<dbReference type="EMBL" id="AY576486">
    <property type="protein sequence ID" value="AAS88434.1"/>
    <property type="molecule type" value="mRNA"/>
</dbReference>
<dbReference type="EMBL" id="CM002236">
    <property type="protein sequence ID" value="EAA35280.1"/>
    <property type="molecule type" value="Genomic_DNA"/>
</dbReference>
<dbReference type="RefSeq" id="XP_964516.1">
    <property type="nucleotide sequence ID" value="XM_959423.2"/>
</dbReference>
<dbReference type="SMR" id="Q7SEQ9"/>
<dbReference type="FunCoup" id="Q7SEQ9">
    <property type="interactions" value="510"/>
</dbReference>
<dbReference type="STRING" id="367110.Q7SEQ9"/>
<dbReference type="PaxDb" id="5141-EFNCRP00000001081"/>
<dbReference type="EnsemblFungi" id="EAA35280">
    <property type="protein sequence ID" value="EAA35280"/>
    <property type="gene ID" value="NCU02157"/>
</dbReference>
<dbReference type="GeneID" id="3880668"/>
<dbReference type="KEGG" id="ncr:NCU02157"/>
<dbReference type="VEuPathDB" id="FungiDB:NCU02157"/>
<dbReference type="HOGENOM" id="CLU_061241_0_0_1"/>
<dbReference type="InParanoid" id="Q7SEQ9"/>
<dbReference type="OrthoDB" id="4249at2759"/>
<dbReference type="UniPathway" id="UPA00232"/>
<dbReference type="Proteomes" id="UP000001805">
    <property type="component" value="Chromosome 1, Linkage Group I"/>
</dbReference>
<dbReference type="GO" id="GO:0031314">
    <property type="term" value="C:extrinsic component of mitochondrial inner membrane"/>
    <property type="evidence" value="ECO:0007669"/>
    <property type="project" value="UniProtKB-UniRule"/>
</dbReference>
<dbReference type="GO" id="GO:0005739">
    <property type="term" value="C:mitochondrion"/>
    <property type="evidence" value="ECO:0000318"/>
    <property type="project" value="GO_Central"/>
</dbReference>
<dbReference type="GO" id="GO:0006744">
    <property type="term" value="P:ubiquinone biosynthetic process"/>
    <property type="evidence" value="ECO:0007669"/>
    <property type="project" value="UniProtKB-UniRule"/>
</dbReference>
<dbReference type="HAMAP" id="MF_03111">
    <property type="entry name" value="Coq4"/>
    <property type="match status" value="1"/>
</dbReference>
<dbReference type="InterPro" id="IPR007715">
    <property type="entry name" value="Coq4"/>
</dbReference>
<dbReference type="InterPro" id="IPR027540">
    <property type="entry name" value="Coq4_euk"/>
</dbReference>
<dbReference type="PANTHER" id="PTHR12922">
    <property type="entry name" value="UBIQUINONE BIOSYNTHESIS PROTEIN"/>
    <property type="match status" value="1"/>
</dbReference>
<dbReference type="PANTHER" id="PTHR12922:SF7">
    <property type="entry name" value="UBIQUINONE BIOSYNTHESIS PROTEIN COQ4 HOMOLOG, MITOCHONDRIAL"/>
    <property type="match status" value="1"/>
</dbReference>
<dbReference type="Pfam" id="PF05019">
    <property type="entry name" value="Coq4"/>
    <property type="match status" value="1"/>
</dbReference>
<reference key="1">
    <citation type="submission" date="2004-03" db="EMBL/GenBank/DDBJ databases">
        <title>N. crassa coq-4 gene.</title>
        <authorList>
            <person name="Lee B.-U."/>
        </authorList>
    </citation>
    <scope>NUCLEOTIDE SEQUENCE [MRNA]</scope>
</reference>
<reference key="2">
    <citation type="journal article" date="2003" name="Nature">
        <title>The genome sequence of the filamentous fungus Neurospora crassa.</title>
        <authorList>
            <person name="Galagan J.E."/>
            <person name="Calvo S.E."/>
            <person name="Borkovich K.A."/>
            <person name="Selker E.U."/>
            <person name="Read N.D."/>
            <person name="Jaffe D.B."/>
            <person name="FitzHugh W."/>
            <person name="Ma L.-J."/>
            <person name="Smirnov S."/>
            <person name="Purcell S."/>
            <person name="Rehman B."/>
            <person name="Elkins T."/>
            <person name="Engels R."/>
            <person name="Wang S."/>
            <person name="Nielsen C.B."/>
            <person name="Butler J."/>
            <person name="Endrizzi M."/>
            <person name="Qui D."/>
            <person name="Ianakiev P."/>
            <person name="Bell-Pedersen D."/>
            <person name="Nelson M.A."/>
            <person name="Werner-Washburne M."/>
            <person name="Selitrennikoff C.P."/>
            <person name="Kinsey J.A."/>
            <person name="Braun E.L."/>
            <person name="Zelter A."/>
            <person name="Schulte U."/>
            <person name="Kothe G.O."/>
            <person name="Jedd G."/>
            <person name="Mewes H.-W."/>
            <person name="Staben C."/>
            <person name="Marcotte E."/>
            <person name="Greenberg D."/>
            <person name="Roy A."/>
            <person name="Foley K."/>
            <person name="Naylor J."/>
            <person name="Stange-Thomann N."/>
            <person name="Barrett R."/>
            <person name="Gnerre S."/>
            <person name="Kamal M."/>
            <person name="Kamvysselis M."/>
            <person name="Mauceli E.W."/>
            <person name="Bielke C."/>
            <person name="Rudd S."/>
            <person name="Frishman D."/>
            <person name="Krystofova S."/>
            <person name="Rasmussen C."/>
            <person name="Metzenberg R.L."/>
            <person name="Perkins D.D."/>
            <person name="Kroken S."/>
            <person name="Cogoni C."/>
            <person name="Macino G."/>
            <person name="Catcheside D.E.A."/>
            <person name="Li W."/>
            <person name="Pratt R.J."/>
            <person name="Osmani S.A."/>
            <person name="DeSouza C.P.C."/>
            <person name="Glass N.L."/>
            <person name="Orbach M.J."/>
            <person name="Berglund J.A."/>
            <person name="Voelker R."/>
            <person name="Yarden O."/>
            <person name="Plamann M."/>
            <person name="Seiler S."/>
            <person name="Dunlap J.C."/>
            <person name="Radford A."/>
            <person name="Aramayo R."/>
            <person name="Natvig D.O."/>
            <person name="Alex L.A."/>
            <person name="Mannhaupt G."/>
            <person name="Ebbole D.J."/>
            <person name="Freitag M."/>
            <person name="Paulsen I."/>
            <person name="Sachs M.S."/>
            <person name="Lander E.S."/>
            <person name="Nusbaum C."/>
            <person name="Birren B.W."/>
        </authorList>
    </citation>
    <scope>NUCLEOTIDE SEQUENCE [LARGE SCALE GENOMIC DNA]</scope>
    <source>
        <strain>ATCC 24698 / 74-OR23-1A / CBS 708.71 / DSM 1257 / FGSC 987</strain>
    </source>
</reference>
<sequence length="347" mass="39668">MEVTALRRSAALVARASSQNAIRPAVCAAISSTSPTPPTQIQTQQTRQFSALNRPPPNYPGHVPLTRLERFGLFVGSGLISLADPLRGDLIASFAEATATPYFIYRLRDAMLSHPTGRRILRQRPRITSQSLNIPYLRSLPPNTVGRTYIDWLDREGVSPDTRSAVRYIDDEECAYVMQRYRECHDFYHALTGLPIVREGEVALKAFEFANTLLPMTGFSVFAAFTMKKSEQKRFRKIYFPWAVKNGLRAKEVINVFWEEELERDVNDLRRELGVEPPPDLREIRKREREEKRRRKEMERMLSGRGTEDVIQKAEKEAEVVAERVKEMRNEVVEKVGEVVGSSAMRG</sequence>
<comment type="function">
    <text evidence="1">Lyase that catalyzes the C1-decarboxylation of 4-hydroxy-3-methoxy-5-(all-trans-polyprenyl)benzoic acid into 2-methoxy-6-(all-trans-polyprenyl)phenol during ubiquinone biosynthesis.</text>
</comment>
<comment type="catalytic activity">
    <reaction evidence="1">
        <text>a 4-hydroxy-3-methoxy-5-(all-trans-polyprenyl)benzoate + H(+) = a 2-methoxy-6-(all-trans-polyprenyl)phenol + CO2</text>
        <dbReference type="Rhea" id="RHEA:81179"/>
        <dbReference type="Rhea" id="RHEA-COMP:9551"/>
        <dbReference type="Rhea" id="RHEA-COMP:10931"/>
        <dbReference type="ChEBI" id="CHEBI:15378"/>
        <dbReference type="ChEBI" id="CHEBI:16526"/>
        <dbReference type="ChEBI" id="CHEBI:62731"/>
        <dbReference type="ChEBI" id="CHEBI:84443"/>
        <dbReference type="EC" id="4.1.1.130"/>
    </reaction>
</comment>
<comment type="cofactor">
    <cofactor evidence="1">
        <name>Zn(2+)</name>
        <dbReference type="ChEBI" id="CHEBI:29105"/>
    </cofactor>
</comment>
<comment type="pathway">
    <text evidence="1">Cofactor biosynthesis; ubiquinone biosynthesis.</text>
</comment>
<comment type="subunit">
    <text evidence="1">Component of a multi-subunit COQ enzyme complex, composed of at least coq-3, coq-4, coq-5, coq-6, coq-7 and coq-9.</text>
</comment>
<comment type="subcellular location">
    <subcellularLocation>
        <location evidence="1">Mitochondrion inner membrane</location>
        <topology evidence="1">Peripheral membrane protein</topology>
        <orientation evidence="1">Matrix side</orientation>
    </subcellularLocation>
</comment>
<comment type="similarity">
    <text evidence="1">Belongs to the COQ4 family.</text>
</comment>
<feature type="transit peptide" description="Mitochondrion" evidence="1">
    <location>
        <begin position="1"/>
        <end position="49"/>
    </location>
</feature>
<feature type="chain" id="PRO_0000388122" description="Ubiquinone biosynthesis protein coq-4, mitochondrial">
    <location>
        <begin position="50"/>
        <end position="347"/>
    </location>
</feature>
<feature type="region of interest" description="Disordered" evidence="2">
    <location>
        <begin position="284"/>
        <end position="310"/>
    </location>
</feature>
<feature type="binding site" evidence="1">
    <location>
        <position position="185"/>
    </location>
    <ligand>
        <name>Zn(2+)</name>
        <dbReference type="ChEBI" id="CHEBI:29105"/>
    </ligand>
</feature>
<feature type="binding site" evidence="1">
    <location>
        <position position="186"/>
    </location>
    <ligand>
        <name>Zn(2+)</name>
        <dbReference type="ChEBI" id="CHEBI:29105"/>
    </ligand>
</feature>
<feature type="binding site" evidence="1">
    <location>
        <position position="189"/>
    </location>
    <ligand>
        <name>Zn(2+)</name>
        <dbReference type="ChEBI" id="CHEBI:29105"/>
    </ligand>
</feature>
<feature type="binding site" evidence="1">
    <location>
        <position position="201"/>
    </location>
    <ligand>
        <name>Zn(2+)</name>
        <dbReference type="ChEBI" id="CHEBI:29105"/>
    </ligand>
</feature>
<name>COQ4_NEUCR</name>
<gene>
    <name evidence="1" type="primary">coq-4</name>
    <name type="ORF">NCU02157</name>
</gene>
<organism>
    <name type="scientific">Neurospora crassa (strain ATCC 24698 / 74-OR23-1A / CBS 708.71 / DSM 1257 / FGSC 987)</name>
    <dbReference type="NCBI Taxonomy" id="367110"/>
    <lineage>
        <taxon>Eukaryota</taxon>
        <taxon>Fungi</taxon>
        <taxon>Dikarya</taxon>
        <taxon>Ascomycota</taxon>
        <taxon>Pezizomycotina</taxon>
        <taxon>Sordariomycetes</taxon>
        <taxon>Sordariomycetidae</taxon>
        <taxon>Sordariales</taxon>
        <taxon>Sordariaceae</taxon>
        <taxon>Neurospora</taxon>
    </lineage>
</organism>